<evidence type="ECO:0000255" key="1">
    <source>
        <dbReference type="HAMAP-Rule" id="MF_00145"/>
    </source>
</evidence>
<keyword id="KW-0067">ATP-binding</keyword>
<keyword id="KW-0963">Cytoplasm</keyword>
<keyword id="KW-0324">Glycolysis</keyword>
<keyword id="KW-0418">Kinase</keyword>
<keyword id="KW-0547">Nucleotide-binding</keyword>
<keyword id="KW-1185">Reference proteome</keyword>
<keyword id="KW-0808">Transferase</keyword>
<comment type="catalytic activity">
    <reaction evidence="1">
        <text>(2R)-3-phosphoglycerate + ATP = (2R)-3-phospho-glyceroyl phosphate + ADP</text>
        <dbReference type="Rhea" id="RHEA:14801"/>
        <dbReference type="ChEBI" id="CHEBI:30616"/>
        <dbReference type="ChEBI" id="CHEBI:57604"/>
        <dbReference type="ChEBI" id="CHEBI:58272"/>
        <dbReference type="ChEBI" id="CHEBI:456216"/>
        <dbReference type="EC" id="2.7.2.3"/>
    </reaction>
</comment>
<comment type="pathway">
    <text evidence="1">Carbohydrate degradation; glycolysis; pyruvate from D-glyceraldehyde 3-phosphate: step 2/5.</text>
</comment>
<comment type="subunit">
    <text evidence="1">Monomer.</text>
</comment>
<comment type="subcellular location">
    <subcellularLocation>
        <location evidence="1">Cytoplasm</location>
    </subcellularLocation>
</comment>
<comment type="similarity">
    <text evidence="1">Belongs to the phosphoglycerate kinase family.</text>
</comment>
<name>PGK_CHLPD</name>
<protein>
    <recommendedName>
        <fullName evidence="1">Phosphoglycerate kinase</fullName>
        <ecNumber evidence="1">2.7.2.3</ecNumber>
    </recommendedName>
</protein>
<proteinExistence type="inferred from homology"/>
<dbReference type="EC" id="2.7.2.3" evidence="1"/>
<dbReference type="EMBL" id="CP000492">
    <property type="protein sequence ID" value="ABL66718.1"/>
    <property type="molecule type" value="Genomic_DNA"/>
</dbReference>
<dbReference type="RefSeq" id="WP_015961245.1">
    <property type="nucleotide sequence ID" value="NC_008639.1"/>
</dbReference>
<dbReference type="SMR" id="A1BJZ1"/>
<dbReference type="STRING" id="290317.Cpha266_2734"/>
<dbReference type="KEGG" id="cph:Cpha266_2734"/>
<dbReference type="eggNOG" id="COG0126">
    <property type="taxonomic scope" value="Bacteria"/>
</dbReference>
<dbReference type="HOGENOM" id="CLU_025427_0_2_10"/>
<dbReference type="OrthoDB" id="9808460at2"/>
<dbReference type="UniPathway" id="UPA00109">
    <property type="reaction ID" value="UER00185"/>
</dbReference>
<dbReference type="Proteomes" id="UP000008701">
    <property type="component" value="Chromosome"/>
</dbReference>
<dbReference type="GO" id="GO:0005829">
    <property type="term" value="C:cytosol"/>
    <property type="evidence" value="ECO:0007669"/>
    <property type="project" value="TreeGrafter"/>
</dbReference>
<dbReference type="GO" id="GO:0043531">
    <property type="term" value="F:ADP binding"/>
    <property type="evidence" value="ECO:0007669"/>
    <property type="project" value="TreeGrafter"/>
</dbReference>
<dbReference type="GO" id="GO:0005524">
    <property type="term" value="F:ATP binding"/>
    <property type="evidence" value="ECO:0007669"/>
    <property type="project" value="UniProtKB-KW"/>
</dbReference>
<dbReference type="GO" id="GO:0004618">
    <property type="term" value="F:phosphoglycerate kinase activity"/>
    <property type="evidence" value="ECO:0007669"/>
    <property type="project" value="UniProtKB-UniRule"/>
</dbReference>
<dbReference type="GO" id="GO:0006094">
    <property type="term" value="P:gluconeogenesis"/>
    <property type="evidence" value="ECO:0007669"/>
    <property type="project" value="TreeGrafter"/>
</dbReference>
<dbReference type="GO" id="GO:0006096">
    <property type="term" value="P:glycolytic process"/>
    <property type="evidence" value="ECO:0007669"/>
    <property type="project" value="UniProtKB-UniRule"/>
</dbReference>
<dbReference type="CDD" id="cd00318">
    <property type="entry name" value="Phosphoglycerate_kinase"/>
    <property type="match status" value="1"/>
</dbReference>
<dbReference type="FunFam" id="3.40.50.1260:FF:000002">
    <property type="entry name" value="Phosphoglycerate kinase"/>
    <property type="match status" value="1"/>
</dbReference>
<dbReference type="FunFam" id="3.40.50.1260:FF:000007">
    <property type="entry name" value="Phosphoglycerate kinase"/>
    <property type="match status" value="1"/>
</dbReference>
<dbReference type="Gene3D" id="3.40.50.1260">
    <property type="entry name" value="Phosphoglycerate kinase, N-terminal domain"/>
    <property type="match status" value="2"/>
</dbReference>
<dbReference type="HAMAP" id="MF_00145">
    <property type="entry name" value="Phosphoglyc_kinase"/>
    <property type="match status" value="1"/>
</dbReference>
<dbReference type="InterPro" id="IPR001576">
    <property type="entry name" value="Phosphoglycerate_kinase"/>
</dbReference>
<dbReference type="InterPro" id="IPR015911">
    <property type="entry name" value="Phosphoglycerate_kinase_CS"/>
</dbReference>
<dbReference type="InterPro" id="IPR015824">
    <property type="entry name" value="Phosphoglycerate_kinase_N"/>
</dbReference>
<dbReference type="InterPro" id="IPR036043">
    <property type="entry name" value="Phosphoglycerate_kinase_sf"/>
</dbReference>
<dbReference type="PANTHER" id="PTHR11406">
    <property type="entry name" value="PHOSPHOGLYCERATE KINASE"/>
    <property type="match status" value="1"/>
</dbReference>
<dbReference type="PANTHER" id="PTHR11406:SF23">
    <property type="entry name" value="PHOSPHOGLYCERATE KINASE 1, CHLOROPLASTIC-RELATED"/>
    <property type="match status" value="1"/>
</dbReference>
<dbReference type="Pfam" id="PF00162">
    <property type="entry name" value="PGK"/>
    <property type="match status" value="1"/>
</dbReference>
<dbReference type="PIRSF" id="PIRSF000724">
    <property type="entry name" value="Pgk"/>
    <property type="match status" value="1"/>
</dbReference>
<dbReference type="PRINTS" id="PR00477">
    <property type="entry name" value="PHGLYCKINASE"/>
</dbReference>
<dbReference type="SUPFAM" id="SSF53748">
    <property type="entry name" value="Phosphoglycerate kinase"/>
    <property type="match status" value="1"/>
</dbReference>
<dbReference type="PROSITE" id="PS00111">
    <property type="entry name" value="PGLYCERATE_KINASE"/>
    <property type="match status" value="1"/>
</dbReference>
<organism>
    <name type="scientific">Chlorobium phaeobacteroides (strain DSM 266 / SMG 266 / 2430)</name>
    <dbReference type="NCBI Taxonomy" id="290317"/>
    <lineage>
        <taxon>Bacteria</taxon>
        <taxon>Pseudomonadati</taxon>
        <taxon>Chlorobiota</taxon>
        <taxon>Chlorobiia</taxon>
        <taxon>Chlorobiales</taxon>
        <taxon>Chlorobiaceae</taxon>
        <taxon>Chlorobium/Pelodictyon group</taxon>
        <taxon>Chlorobium</taxon>
    </lineage>
</organism>
<gene>
    <name evidence="1" type="primary">pgk</name>
    <name type="ordered locus">Cpha266_2734</name>
</gene>
<feature type="chain" id="PRO_1000057977" description="Phosphoglycerate kinase">
    <location>
        <begin position="1"/>
        <end position="397"/>
    </location>
</feature>
<feature type="binding site" evidence="1">
    <location>
        <begin position="21"/>
        <end position="23"/>
    </location>
    <ligand>
        <name>substrate</name>
    </ligand>
</feature>
<feature type="binding site" evidence="1">
    <location>
        <position position="37"/>
    </location>
    <ligand>
        <name>substrate</name>
    </ligand>
</feature>
<feature type="binding site" evidence="1">
    <location>
        <begin position="60"/>
        <end position="63"/>
    </location>
    <ligand>
        <name>substrate</name>
    </ligand>
</feature>
<feature type="binding site" evidence="1">
    <location>
        <position position="119"/>
    </location>
    <ligand>
        <name>substrate</name>
    </ligand>
</feature>
<feature type="binding site" evidence="1">
    <location>
        <position position="152"/>
    </location>
    <ligand>
        <name>substrate</name>
    </ligand>
</feature>
<feature type="binding site" evidence="1">
    <location>
        <position position="203"/>
    </location>
    <ligand>
        <name>ATP</name>
        <dbReference type="ChEBI" id="CHEBI:30616"/>
    </ligand>
</feature>
<feature type="binding site" evidence="1">
    <location>
        <position position="294"/>
    </location>
    <ligand>
        <name>ATP</name>
        <dbReference type="ChEBI" id="CHEBI:30616"/>
    </ligand>
</feature>
<feature type="binding site" evidence="1">
    <location>
        <position position="325"/>
    </location>
    <ligand>
        <name>ATP</name>
        <dbReference type="ChEBI" id="CHEBI:30616"/>
    </ligand>
</feature>
<feature type="binding site" evidence="1">
    <location>
        <begin position="354"/>
        <end position="357"/>
    </location>
    <ligand>
        <name>ATP</name>
        <dbReference type="ChEBI" id="CHEBI:30616"/>
    </ligand>
</feature>
<accession>A1BJZ1</accession>
<sequence length="397" mass="42000">MQKKTLSDVAIQGKRVLMRVDFNVPIDEEKNITDDKRIVEALPSIKKIIDGGGRLILMSHLGRPKGKVNAEFSLAPVAHRLSELLDTPVAMAKDCIGTEVMQAALALQDGEVMLLENLRFHAEEEANNPDFAKELASLGEIFVNDAFGTAHRAHASTEGITHYVPVAVAGYLIEKELNYLGKALDNPERPFVAILGGSKISGKIDVLENLFTKVDTVLIGGAMVFTFFKAQGLNVGNSLVEDNKLDLAQALLKQAADKGINLLLPDDVLVAATISSDASSHVEAVNSMSDGMIGVDIGPKTIEKYRNEILAARTVLWNGPMGVFEIDNFAEGTFAIAKALAEATSSGAITIVGGGDSAAAIAKAALSDSITHISTGGGASLEFLEGKALPGIEALND</sequence>
<reference key="1">
    <citation type="submission" date="2006-12" db="EMBL/GenBank/DDBJ databases">
        <title>Complete sequence of Chlorobium phaeobacteroides DSM 266.</title>
        <authorList>
            <consortium name="US DOE Joint Genome Institute"/>
            <person name="Copeland A."/>
            <person name="Lucas S."/>
            <person name="Lapidus A."/>
            <person name="Barry K."/>
            <person name="Detter J.C."/>
            <person name="Glavina del Rio T."/>
            <person name="Hammon N."/>
            <person name="Israni S."/>
            <person name="Pitluck S."/>
            <person name="Goltsman E."/>
            <person name="Schmutz J."/>
            <person name="Larimer F."/>
            <person name="Land M."/>
            <person name="Hauser L."/>
            <person name="Mikhailova N."/>
            <person name="Li T."/>
            <person name="Overmann J."/>
            <person name="Bryant D.A."/>
            <person name="Richardson P."/>
        </authorList>
    </citation>
    <scope>NUCLEOTIDE SEQUENCE [LARGE SCALE GENOMIC DNA]</scope>
    <source>
        <strain>DSM 266 / SMG 266 / 2430</strain>
    </source>
</reference>